<feature type="chain" id="PRO_0000373994" description="Serine/threonine-protein kinase rio2">
    <location>
        <begin position="1"/>
        <end position="522"/>
    </location>
</feature>
<feature type="domain" description="Protein kinase">
    <location>
        <begin position="93"/>
        <end position="248"/>
    </location>
</feature>
<feature type="region of interest" description="Disordered" evidence="2">
    <location>
        <begin position="313"/>
        <end position="435"/>
    </location>
</feature>
<feature type="region of interest" description="Disordered" evidence="2">
    <location>
        <begin position="452"/>
        <end position="484"/>
    </location>
</feature>
<feature type="compositionally biased region" description="Acidic residues" evidence="2">
    <location>
        <begin position="319"/>
        <end position="361"/>
    </location>
</feature>
<feature type="compositionally biased region" description="Basic and acidic residues" evidence="2">
    <location>
        <begin position="371"/>
        <end position="383"/>
    </location>
</feature>
<feature type="compositionally biased region" description="Acidic residues" evidence="2">
    <location>
        <begin position="384"/>
        <end position="409"/>
    </location>
</feature>
<feature type="compositionally biased region" description="Basic and acidic residues" evidence="2">
    <location>
        <begin position="425"/>
        <end position="435"/>
    </location>
</feature>
<feature type="compositionally biased region" description="Basic and acidic residues" evidence="2">
    <location>
        <begin position="460"/>
        <end position="484"/>
    </location>
</feature>
<feature type="active site" description="Proton acceptor" evidence="1">
    <location>
        <position position="226"/>
    </location>
</feature>
<feature type="binding site" evidence="1">
    <location>
        <position position="121"/>
    </location>
    <ligand>
        <name>ATP</name>
        <dbReference type="ChEBI" id="CHEBI:30616"/>
    </ligand>
</feature>
<gene>
    <name type="primary">rio2</name>
    <name type="ORF">DDB_G0282099</name>
</gene>
<organism>
    <name type="scientific">Dictyostelium discoideum</name>
    <name type="common">Social amoeba</name>
    <dbReference type="NCBI Taxonomy" id="44689"/>
    <lineage>
        <taxon>Eukaryota</taxon>
        <taxon>Amoebozoa</taxon>
        <taxon>Evosea</taxon>
        <taxon>Eumycetozoa</taxon>
        <taxon>Dictyostelia</taxon>
        <taxon>Dictyosteliales</taxon>
        <taxon>Dictyosteliaceae</taxon>
        <taxon>Dictyostelium</taxon>
    </lineage>
</organism>
<evidence type="ECO:0000250" key="1"/>
<evidence type="ECO:0000256" key="2">
    <source>
        <dbReference type="SAM" id="MobiDB-lite"/>
    </source>
</evidence>
<evidence type="ECO:0000305" key="3"/>
<reference key="1">
    <citation type="journal article" date="2005" name="Nature">
        <title>The genome of the social amoeba Dictyostelium discoideum.</title>
        <authorList>
            <person name="Eichinger L."/>
            <person name="Pachebat J.A."/>
            <person name="Gloeckner G."/>
            <person name="Rajandream M.A."/>
            <person name="Sucgang R."/>
            <person name="Berriman M."/>
            <person name="Song J."/>
            <person name="Olsen R."/>
            <person name="Szafranski K."/>
            <person name="Xu Q."/>
            <person name="Tunggal B."/>
            <person name="Kummerfeld S."/>
            <person name="Madera M."/>
            <person name="Konfortov B.A."/>
            <person name="Rivero F."/>
            <person name="Bankier A.T."/>
            <person name="Lehmann R."/>
            <person name="Hamlin N."/>
            <person name="Davies R."/>
            <person name="Gaudet P."/>
            <person name="Fey P."/>
            <person name="Pilcher K."/>
            <person name="Chen G."/>
            <person name="Saunders D."/>
            <person name="Sodergren E.J."/>
            <person name="Davis P."/>
            <person name="Kerhornou A."/>
            <person name="Nie X."/>
            <person name="Hall N."/>
            <person name="Anjard C."/>
            <person name="Hemphill L."/>
            <person name="Bason N."/>
            <person name="Farbrother P."/>
            <person name="Desany B."/>
            <person name="Just E."/>
            <person name="Morio T."/>
            <person name="Rost R."/>
            <person name="Churcher C.M."/>
            <person name="Cooper J."/>
            <person name="Haydock S."/>
            <person name="van Driessche N."/>
            <person name="Cronin A."/>
            <person name="Goodhead I."/>
            <person name="Muzny D.M."/>
            <person name="Mourier T."/>
            <person name="Pain A."/>
            <person name="Lu M."/>
            <person name="Harper D."/>
            <person name="Lindsay R."/>
            <person name="Hauser H."/>
            <person name="James K.D."/>
            <person name="Quiles M."/>
            <person name="Madan Babu M."/>
            <person name="Saito T."/>
            <person name="Buchrieser C."/>
            <person name="Wardroper A."/>
            <person name="Felder M."/>
            <person name="Thangavelu M."/>
            <person name="Johnson D."/>
            <person name="Knights A."/>
            <person name="Loulseged H."/>
            <person name="Mungall K.L."/>
            <person name="Oliver K."/>
            <person name="Price C."/>
            <person name="Quail M.A."/>
            <person name="Urushihara H."/>
            <person name="Hernandez J."/>
            <person name="Rabbinowitsch E."/>
            <person name="Steffen D."/>
            <person name="Sanders M."/>
            <person name="Ma J."/>
            <person name="Kohara Y."/>
            <person name="Sharp S."/>
            <person name="Simmonds M.N."/>
            <person name="Spiegler S."/>
            <person name="Tivey A."/>
            <person name="Sugano S."/>
            <person name="White B."/>
            <person name="Walker D."/>
            <person name="Woodward J.R."/>
            <person name="Winckler T."/>
            <person name="Tanaka Y."/>
            <person name="Shaulsky G."/>
            <person name="Schleicher M."/>
            <person name="Weinstock G.M."/>
            <person name="Rosenthal A."/>
            <person name="Cox E.C."/>
            <person name="Chisholm R.L."/>
            <person name="Gibbs R.A."/>
            <person name="Loomis W.F."/>
            <person name="Platzer M."/>
            <person name="Kay R.R."/>
            <person name="Williams J.G."/>
            <person name="Dear P.H."/>
            <person name="Noegel A.A."/>
            <person name="Barrell B.G."/>
            <person name="Kuspa A."/>
        </authorList>
    </citation>
    <scope>NUCLEOTIDE SEQUENCE [LARGE SCALE GENOMIC DNA]</scope>
    <source>
        <strain>AX4</strain>
    </source>
</reference>
<comment type="function">
    <text evidence="1">Required for the final endonucleolytic cleavage of 20S pre-rRNA at site D in the cytoplasm, converting it into the mature 18S rRNA. Involved in normal export of the pre-40S particles from the nucleus to the cytoplasm (By similarity).</text>
</comment>
<comment type="catalytic activity">
    <reaction>
        <text>L-seryl-[protein] + ATP = O-phospho-L-seryl-[protein] + ADP + H(+)</text>
        <dbReference type="Rhea" id="RHEA:17989"/>
        <dbReference type="Rhea" id="RHEA-COMP:9863"/>
        <dbReference type="Rhea" id="RHEA-COMP:11604"/>
        <dbReference type="ChEBI" id="CHEBI:15378"/>
        <dbReference type="ChEBI" id="CHEBI:29999"/>
        <dbReference type="ChEBI" id="CHEBI:30616"/>
        <dbReference type="ChEBI" id="CHEBI:83421"/>
        <dbReference type="ChEBI" id="CHEBI:456216"/>
        <dbReference type="EC" id="2.7.11.1"/>
    </reaction>
</comment>
<comment type="catalytic activity">
    <reaction>
        <text>L-threonyl-[protein] + ATP = O-phospho-L-threonyl-[protein] + ADP + H(+)</text>
        <dbReference type="Rhea" id="RHEA:46608"/>
        <dbReference type="Rhea" id="RHEA-COMP:11060"/>
        <dbReference type="Rhea" id="RHEA-COMP:11605"/>
        <dbReference type="ChEBI" id="CHEBI:15378"/>
        <dbReference type="ChEBI" id="CHEBI:30013"/>
        <dbReference type="ChEBI" id="CHEBI:30616"/>
        <dbReference type="ChEBI" id="CHEBI:61977"/>
        <dbReference type="ChEBI" id="CHEBI:456216"/>
        <dbReference type="EC" id="2.7.11.1"/>
    </reaction>
</comment>
<comment type="cofactor">
    <cofactor evidence="3">
        <name>Mg(2+)</name>
        <dbReference type="ChEBI" id="CHEBI:18420"/>
    </cofactor>
</comment>
<comment type="subunit">
    <text evidence="1">Component of a late pre-40S ribosomal particle.</text>
</comment>
<comment type="subcellular location">
    <subcellularLocation>
        <location evidence="1">Cytoplasm</location>
    </subcellularLocation>
    <subcellularLocation>
        <location evidence="1">Nucleus</location>
    </subcellularLocation>
</comment>
<comment type="similarity">
    <text evidence="3">Belongs to the protein kinase superfamily. RIO-type Ser/Thr kinase family.</text>
</comment>
<proteinExistence type="inferred from homology"/>
<name>RIO2_DICDI</name>
<sequence>MKLDPKALRYLSKDDFRTLVAVEMGMKNHELVPVSLICTIANLKYGGTKKSIQTLHKFKLLFHDGRNYDGYKLTYLGYDFLALKTLVSRGVCSYVGNQIGVGKESDIYIVANDDNQEMVLKLHRLGRVSFKTIKNNRDYLKHRKSASWLYLSRLAALKEFAYMKALYENGFPVPTPIDYNRHCIVMSRARGYPLTQIVQLRHPSKVYSDLMNLIVKLASYGLIHGDFNEFNILINDEEEITLIDFPQMVSTSHLNAEMYFDRDVTCIRVFFEKRFNFIGERWPKFKDCQNIHSLDVEISASGFTRDMEKEFQDLSKQQDDDEINNNDSDENDEDDDEDDDDDDENNDDDENNDNNIENENEENIKKSSKVNKKEVGKEIKKEEEENNNSEEEDEEEEEEEDSDSEESVEDNTPVIEEFKGLSLNKNRDFKFSNLKDEDQNAPIVLRKEFIENLDENQPTEPKKEKVELTEEEKQRRKEEKRQKMITDKVKRQLGKTMREKVSVRNNVKSRTKKEVQAHISSY</sequence>
<accession>Q54T05</accession>
<keyword id="KW-0067">ATP-binding</keyword>
<keyword id="KW-0963">Cytoplasm</keyword>
<keyword id="KW-0418">Kinase</keyword>
<keyword id="KW-0460">Magnesium</keyword>
<keyword id="KW-0479">Metal-binding</keyword>
<keyword id="KW-0547">Nucleotide-binding</keyword>
<keyword id="KW-0539">Nucleus</keyword>
<keyword id="KW-0597">Phosphoprotein</keyword>
<keyword id="KW-1185">Reference proteome</keyword>
<keyword id="KW-0690">Ribosome biogenesis</keyword>
<keyword id="KW-0723">Serine/threonine-protein kinase</keyword>
<keyword id="KW-0808">Transferase</keyword>
<protein>
    <recommendedName>
        <fullName>Serine/threonine-protein kinase rio2</fullName>
        <ecNumber>2.7.11.1</ecNumber>
    </recommendedName>
</protein>
<dbReference type="EC" id="2.7.11.1"/>
<dbReference type="EMBL" id="AAFI02000045">
    <property type="protein sequence ID" value="EAL66375.1"/>
    <property type="molecule type" value="Genomic_DNA"/>
</dbReference>
<dbReference type="RefSeq" id="XP_640350.1">
    <property type="nucleotide sequence ID" value="XM_635258.1"/>
</dbReference>
<dbReference type="SMR" id="Q54T05"/>
<dbReference type="FunCoup" id="Q54T05">
    <property type="interactions" value="920"/>
</dbReference>
<dbReference type="STRING" id="44689.Q54T05"/>
<dbReference type="PaxDb" id="44689-DDB0216429"/>
<dbReference type="EnsemblProtists" id="EAL66375">
    <property type="protein sequence ID" value="EAL66375"/>
    <property type="gene ID" value="DDB_G0282099"/>
</dbReference>
<dbReference type="GeneID" id="8623405"/>
<dbReference type="KEGG" id="ddi:DDB_G0282099"/>
<dbReference type="dictyBase" id="DDB_G0282099">
    <property type="gene designation" value="rio2"/>
</dbReference>
<dbReference type="VEuPathDB" id="AmoebaDB:DDB_G0282099"/>
<dbReference type="eggNOG" id="KOG2268">
    <property type="taxonomic scope" value="Eukaryota"/>
</dbReference>
<dbReference type="HOGENOM" id="CLU_018693_0_3_1"/>
<dbReference type="InParanoid" id="Q54T05"/>
<dbReference type="OMA" id="VKEYAGW"/>
<dbReference type="PhylomeDB" id="Q54T05"/>
<dbReference type="PRO" id="PR:Q54T05"/>
<dbReference type="Proteomes" id="UP000002195">
    <property type="component" value="Chromosome 3"/>
</dbReference>
<dbReference type="GO" id="GO:0005829">
    <property type="term" value="C:cytosol"/>
    <property type="evidence" value="ECO:0000318"/>
    <property type="project" value="GO_Central"/>
</dbReference>
<dbReference type="GO" id="GO:0005634">
    <property type="term" value="C:nucleus"/>
    <property type="evidence" value="ECO:0000318"/>
    <property type="project" value="GO_Central"/>
</dbReference>
<dbReference type="GO" id="GO:0030688">
    <property type="term" value="C:preribosome, small subunit precursor"/>
    <property type="evidence" value="ECO:0000318"/>
    <property type="project" value="GO_Central"/>
</dbReference>
<dbReference type="GO" id="GO:0005524">
    <property type="term" value="F:ATP binding"/>
    <property type="evidence" value="ECO:0007669"/>
    <property type="project" value="UniProtKB-KW"/>
</dbReference>
<dbReference type="GO" id="GO:0046872">
    <property type="term" value="F:metal ion binding"/>
    <property type="evidence" value="ECO:0007669"/>
    <property type="project" value="UniProtKB-KW"/>
</dbReference>
<dbReference type="GO" id="GO:0004672">
    <property type="term" value="F:protein kinase activity"/>
    <property type="evidence" value="ECO:0000250"/>
    <property type="project" value="dictyBase"/>
</dbReference>
<dbReference type="GO" id="GO:0106310">
    <property type="term" value="F:protein serine kinase activity"/>
    <property type="evidence" value="ECO:0007669"/>
    <property type="project" value="RHEA"/>
</dbReference>
<dbReference type="GO" id="GO:0004674">
    <property type="term" value="F:protein serine/threonine kinase activity"/>
    <property type="evidence" value="ECO:0007669"/>
    <property type="project" value="UniProtKB-KW"/>
</dbReference>
<dbReference type="GO" id="GO:0030490">
    <property type="term" value="P:maturation of SSU-rRNA"/>
    <property type="evidence" value="ECO:0000318"/>
    <property type="project" value="GO_Central"/>
</dbReference>
<dbReference type="GO" id="GO:0006468">
    <property type="term" value="P:protein phosphorylation"/>
    <property type="evidence" value="ECO:0000250"/>
    <property type="project" value="dictyBase"/>
</dbReference>
<dbReference type="CDD" id="cd05144">
    <property type="entry name" value="RIO2_C"/>
    <property type="match status" value="1"/>
</dbReference>
<dbReference type="FunFam" id="1.10.10.10:FF:000053">
    <property type="entry name" value="Serine/threonine-protein kinase RIO2"/>
    <property type="match status" value="1"/>
</dbReference>
<dbReference type="FunFam" id="1.10.510.10:FF:000307">
    <property type="entry name" value="Serine/threonine-protein kinase RIO2"/>
    <property type="match status" value="1"/>
</dbReference>
<dbReference type="FunFam" id="3.30.200.20:FF:000052">
    <property type="entry name" value="Serine/threonine-protein kinase RIO2"/>
    <property type="match status" value="1"/>
</dbReference>
<dbReference type="Gene3D" id="3.30.200.20">
    <property type="entry name" value="Phosphorylase Kinase, domain 1"/>
    <property type="match status" value="1"/>
</dbReference>
<dbReference type="Gene3D" id="1.10.510.10">
    <property type="entry name" value="Transferase(Phosphotransferase) domain 1"/>
    <property type="match status" value="1"/>
</dbReference>
<dbReference type="Gene3D" id="1.10.10.10">
    <property type="entry name" value="Winged helix-like DNA-binding domain superfamily/Winged helix DNA-binding domain"/>
    <property type="match status" value="1"/>
</dbReference>
<dbReference type="InterPro" id="IPR011009">
    <property type="entry name" value="Kinase-like_dom_sf"/>
</dbReference>
<dbReference type="InterPro" id="IPR030484">
    <property type="entry name" value="Rio2"/>
</dbReference>
<dbReference type="InterPro" id="IPR015285">
    <property type="entry name" value="RIO2_wHTH_N"/>
</dbReference>
<dbReference type="InterPro" id="IPR018934">
    <property type="entry name" value="RIO_dom"/>
</dbReference>
<dbReference type="InterPro" id="IPR000687">
    <property type="entry name" value="RIO_kinase"/>
</dbReference>
<dbReference type="InterPro" id="IPR018935">
    <property type="entry name" value="RIO_kinase_CS"/>
</dbReference>
<dbReference type="InterPro" id="IPR036388">
    <property type="entry name" value="WH-like_DNA-bd_sf"/>
</dbReference>
<dbReference type="InterPro" id="IPR036390">
    <property type="entry name" value="WH_DNA-bd_sf"/>
</dbReference>
<dbReference type="PANTHER" id="PTHR45852">
    <property type="entry name" value="SER/THR-PROTEIN KINASE RIO2"/>
    <property type="match status" value="1"/>
</dbReference>
<dbReference type="PANTHER" id="PTHR45852:SF1">
    <property type="entry name" value="SERINE_THREONINE-PROTEIN KINASE RIO2"/>
    <property type="match status" value="1"/>
</dbReference>
<dbReference type="Pfam" id="PF01163">
    <property type="entry name" value="RIO1"/>
    <property type="match status" value="1"/>
</dbReference>
<dbReference type="Pfam" id="PF09202">
    <property type="entry name" value="Rio2_N"/>
    <property type="match status" value="1"/>
</dbReference>
<dbReference type="SMART" id="SM00090">
    <property type="entry name" value="RIO"/>
    <property type="match status" value="1"/>
</dbReference>
<dbReference type="SUPFAM" id="SSF56112">
    <property type="entry name" value="Protein kinase-like (PK-like)"/>
    <property type="match status" value="1"/>
</dbReference>
<dbReference type="SUPFAM" id="SSF46785">
    <property type="entry name" value="Winged helix' DNA-binding domain"/>
    <property type="match status" value="1"/>
</dbReference>
<dbReference type="PROSITE" id="PS01245">
    <property type="entry name" value="RIO1"/>
    <property type="match status" value="1"/>
</dbReference>